<feature type="chain" id="PRO_0000273439" description="Organic anion transporter 3">
    <location>
        <begin position="1"/>
        <end position="542"/>
    </location>
</feature>
<feature type="topological domain" description="Cytoplasmic" evidence="4">
    <location>
        <begin position="1"/>
        <end position="9"/>
    </location>
</feature>
<feature type="transmembrane region" description="Helical" evidence="4">
    <location>
        <begin position="10"/>
        <end position="30"/>
    </location>
</feature>
<feature type="topological domain" description="Extracellular" evidence="4">
    <location>
        <begin position="31"/>
        <end position="123"/>
    </location>
</feature>
<feature type="transmembrane region" description="Helical" evidence="4">
    <location>
        <begin position="124"/>
        <end position="144"/>
    </location>
</feature>
<feature type="topological domain" description="Cytoplasmic" evidence="4">
    <location>
        <begin position="145"/>
        <end position="154"/>
    </location>
</feature>
<feature type="transmembrane region" description="Helical" evidence="4">
    <location>
        <begin position="155"/>
        <end position="175"/>
    </location>
</feature>
<feature type="topological domain" description="Extracellular" evidence="4">
    <location>
        <position position="176"/>
    </location>
</feature>
<feature type="transmembrane region" description="Helical" evidence="4">
    <location>
        <begin position="177"/>
        <end position="197"/>
    </location>
</feature>
<feature type="topological domain" description="Cytoplasmic" evidence="4">
    <location>
        <begin position="198"/>
        <end position="212"/>
    </location>
</feature>
<feature type="transmembrane region" description="Helical" evidence="4">
    <location>
        <begin position="213"/>
        <end position="233"/>
    </location>
</feature>
<feature type="topological domain" description="Extracellular" evidence="4">
    <location>
        <begin position="234"/>
        <end position="236"/>
    </location>
</feature>
<feature type="transmembrane region" description="Helical" evidence="4">
    <location>
        <begin position="237"/>
        <end position="257"/>
    </location>
</feature>
<feature type="topological domain" description="Cytoplasmic" evidence="4">
    <location>
        <begin position="258"/>
        <end position="327"/>
    </location>
</feature>
<feature type="transmembrane region" description="Helical" evidence="4">
    <location>
        <begin position="328"/>
        <end position="348"/>
    </location>
</feature>
<feature type="topological domain" description="Extracellular" evidence="4">
    <location>
        <begin position="349"/>
        <end position="354"/>
    </location>
</feature>
<feature type="transmembrane region" description="Helical" evidence="4">
    <location>
        <begin position="355"/>
        <end position="375"/>
    </location>
</feature>
<feature type="topological domain" description="Cytoplasmic" evidence="4">
    <location>
        <begin position="376"/>
        <end position="386"/>
    </location>
</feature>
<feature type="transmembrane region" description="Helical" evidence="4">
    <location>
        <begin position="387"/>
        <end position="407"/>
    </location>
</feature>
<feature type="topological domain" description="Extracellular" evidence="4">
    <location>
        <begin position="408"/>
        <end position="411"/>
    </location>
</feature>
<feature type="transmembrane region" description="Helical" evidence="4">
    <location>
        <begin position="412"/>
        <end position="432"/>
    </location>
</feature>
<feature type="topological domain" description="Cytoplasmic" evidence="4">
    <location>
        <begin position="433"/>
        <end position="471"/>
    </location>
</feature>
<feature type="transmembrane region" description="Helical" evidence="4">
    <location>
        <begin position="472"/>
        <end position="492"/>
    </location>
</feature>
<feature type="topological domain" description="Extracellular" evidence="4">
    <location>
        <begin position="493"/>
        <end position="542"/>
    </location>
</feature>
<feature type="region of interest" description="Disordered" evidence="5">
    <location>
        <begin position="515"/>
        <end position="542"/>
    </location>
</feature>
<feature type="compositionally biased region" description="Basic and acidic residues" evidence="5">
    <location>
        <begin position="517"/>
        <end position="527"/>
    </location>
</feature>
<feature type="modified residue" description="Phosphoserine" evidence="3">
    <location>
        <position position="4"/>
    </location>
</feature>
<feature type="glycosylation site" description="N-linked (GlcNAc...) asparagine" evidence="4">
    <location>
        <position position="86"/>
    </location>
</feature>
<feature type="glycosylation site" description="N-linked (GlcNAc...) asparagine" evidence="4">
    <location>
        <position position="102"/>
    </location>
</feature>
<feature type="splice variant" id="VSP_022562" description="In isoform 3." evidence="28">
    <location>
        <begin position="1"/>
        <end position="345"/>
    </location>
</feature>
<feature type="splice variant" id="VSP_045824" description="In isoform 5." evidence="29">
    <location>
        <begin position="1"/>
        <end position="123"/>
    </location>
</feature>
<feature type="splice variant" id="VSP_045272" description="In isoform 4." evidence="25">
    <location>
        <begin position="1"/>
        <end position="91"/>
    </location>
</feature>
<feature type="splice variant" id="VSP_022563" description="In isoform 3." evidence="28">
    <original>DLQTVRTVLAVFGKGCLSSSFSCLFLYTSELYPTVIRQTGMGVSNLWTRV</original>
    <variation>GERLGLPQNPLEEAARLGARDFTAGSASKSLCYLEQVPALSGAQGLSSRK</variation>
    <location>
        <begin position="406"/>
        <end position="455"/>
    </location>
</feature>
<feature type="splice variant" id="VSP_022564" description="In isoform 3." evidence="28">
    <location>
        <begin position="456"/>
        <end position="542"/>
    </location>
</feature>
<feature type="splice variant" id="VSP_022565" description="In isoform 2." evidence="23">
    <original>W</original>
    <variation>WSVTASGPPR</variation>
    <location>
        <position position="510"/>
    </location>
</feature>
<feature type="sequence variant" id="VAR_030146" description="In dbSNP:rs11568479.">
    <original>F</original>
    <variation>L</variation>
    <location>
        <position position="129"/>
    </location>
</feature>
<feature type="sequence variant" id="VAR_030147" description="Complete loss of function; dbSNP:rs45566039." evidence="16">
    <original>R</original>
    <variation>S</variation>
    <location>
        <position position="149"/>
    </location>
</feature>
<feature type="sequence variant" id="VAR_030148" description="Complete loss of function; dbSNP:rs11568493." evidence="16">
    <original>I</original>
    <variation>R</variation>
    <location>
        <position position="260"/>
    </location>
</feature>
<feature type="sequence variant" id="VAR_030149" description="Reduced function; dbSNP:rs11568492." evidence="16">
    <original>R</original>
    <variation>W</variation>
    <location>
        <position position="277"/>
    </location>
</feature>
<feature type="sequence variant" id="VAR_030150" description="In 6% of African-Americans; dbSNP:rs45438191.">
    <original>V</original>
    <variation>A</variation>
    <location>
        <position position="281"/>
    </location>
</feature>
<feature type="sequence variant" id="VAR_030151" description="In 3.5% of Asian-American; reduced function; dbSNP:rs11568482." evidence="16">
    <original>I</original>
    <variation>F</variation>
    <location>
        <position position="305"/>
    </location>
</feature>
<feature type="sequence variant" id="VAR_030152" description="In dbSNP:rs749944923." evidence="10">
    <original>A</original>
    <variation>V</variation>
    <location>
        <position position="389"/>
    </location>
</feature>
<feature type="sequence variant" id="VAR_030153" description="In dbSNP:rs11568486.">
    <original>V</original>
    <variation>I</variation>
    <location>
        <position position="448"/>
    </location>
</feature>
<feature type="sequence conflict" description="In Ref. 1; AAD19357." evidence="29" ref="1">
    <location>
        <position position="150"/>
    </location>
</feature>
<feature type="sequence conflict" description="In Ref. 1; AAD19357." evidence="29" ref="1">
    <original>P</original>
    <variation>T</variation>
    <location>
        <position position="151"/>
    </location>
</feature>
<feature type="sequence conflict" description="In Ref. 2; BAB47393." evidence="29" ref="2">
    <original>K</original>
    <variation>E</variation>
    <location>
        <position position="271"/>
    </location>
</feature>
<feature type="sequence conflict" description="In Ref. 1; AAD19357." evidence="29" ref="1">
    <location>
        <position position="286"/>
    </location>
</feature>
<feature type="sequence conflict" description="In Ref. 1; AAD19357." evidence="29" ref="1">
    <original>R</original>
    <variation>E</variation>
    <location>
        <position position="411"/>
    </location>
</feature>
<feature type="sequence conflict" description="In Ref. 1; AAD19357." evidence="29" ref="1">
    <original>YGI</original>
    <variation>FTGS</variation>
    <location>
        <begin position="478"/>
        <end position="480"/>
    </location>
</feature>
<feature type="sequence conflict" description="In Ref. 3; BAG60589." evidence="29" ref="3">
    <original>A</original>
    <variation>T</variation>
    <location>
        <position position="526"/>
    </location>
</feature>
<proteinExistence type="evidence at protein level"/>
<accession>Q8TCC7</accession>
<accession>B4DPH7</accession>
<accession>F5GWA8</accession>
<accession>F5H5J1</accession>
<accession>O95820</accession>
<accession>Q59EW9</accession>
<accession>Q96TC1</accession>
<sequence>MTFSEILDRVGSMGHFQFLHVAILGLPILNMANHNLLQIFTAATPVHHCRPPHNASTGPWVLPMGPNGKPERCLRFVHPPNASLPNDTQRAMEPCLDGWVYNSTKDSIVTEWDLVCNSNKLKEMAQSIFMAGILIGGLVLGDLSDRFGRRPILTCSYLLLAASGSGAAFSPTFPIYMVFRFLCGFGISGITLSTVILNVEWVPTRMRAIMSTALGYCYTFGQFILPGLAYAIPQWRWLQLTVSIPFFVFFLSSWWTPESIRWLVLSGKSSKALKILRRVAVFNGKKEEGERLSLEELKLNLQKEISLAKAKYTASDLFRIPMLRRMTFCLSLAWFATGFAYYSLAMGVEEFGVNLYILQIIFGGVDVPAKFITILSLSYLGRHTTQAAALLLAGGAILALTFVPLDLQTVRTVLAVFGKGCLSSSFSCLFLYTSELYPTVIRQTGMGVSNLWTRVGSMVSPLVKITGEVQPFIPNIIYGITALLGGSAALFLPETLNQPLPETIEDLENWSLRAKKPKQEPEVEKASQRIPLQPHGPGLGSS</sequence>
<protein>
    <recommendedName>
        <fullName evidence="24">Organic anion transporter 3</fullName>
        <shortName evidence="24">hOAT3</shortName>
    </recommendedName>
    <alternativeName>
        <fullName>Organic anion/dicarboxylate exchanger</fullName>
    </alternativeName>
    <alternativeName>
        <fullName evidence="26">Solute carrier family 22 member 8</fullName>
    </alternativeName>
</protein>
<gene>
    <name evidence="32" type="primary">SLC22A8</name>
    <name type="synonym">OAT3</name>
</gene>
<organism>
    <name type="scientific">Homo sapiens</name>
    <name type="common">Human</name>
    <dbReference type="NCBI Taxonomy" id="9606"/>
    <lineage>
        <taxon>Eukaryota</taxon>
        <taxon>Metazoa</taxon>
        <taxon>Chordata</taxon>
        <taxon>Craniata</taxon>
        <taxon>Vertebrata</taxon>
        <taxon>Euteleostomi</taxon>
        <taxon>Mammalia</taxon>
        <taxon>Eutheria</taxon>
        <taxon>Euarchontoglires</taxon>
        <taxon>Primates</taxon>
        <taxon>Haplorrhini</taxon>
        <taxon>Catarrhini</taxon>
        <taxon>Hominidae</taxon>
        <taxon>Homo</taxon>
    </lineage>
</organism>
<evidence type="ECO:0000250" key="1"/>
<evidence type="ECO:0000250" key="2">
    <source>
        <dbReference type="UniProtKB" id="O88909"/>
    </source>
</evidence>
<evidence type="ECO:0000250" key="3">
    <source>
        <dbReference type="UniProtKB" id="Q9R1U7"/>
    </source>
</evidence>
<evidence type="ECO:0000255" key="4"/>
<evidence type="ECO:0000256" key="5">
    <source>
        <dbReference type="SAM" id="MobiDB-lite"/>
    </source>
</evidence>
<evidence type="ECO:0000269" key="6">
    <source>
    </source>
</evidence>
<evidence type="ECO:0000269" key="7">
    <source>
    </source>
</evidence>
<evidence type="ECO:0000269" key="8">
    <source>
    </source>
</evidence>
<evidence type="ECO:0000269" key="9">
    <source>
    </source>
</evidence>
<evidence type="ECO:0000269" key="10">
    <source>
    </source>
</evidence>
<evidence type="ECO:0000269" key="11">
    <source>
    </source>
</evidence>
<evidence type="ECO:0000269" key="12">
    <source>
    </source>
</evidence>
<evidence type="ECO:0000269" key="13">
    <source>
    </source>
</evidence>
<evidence type="ECO:0000269" key="14">
    <source>
    </source>
</evidence>
<evidence type="ECO:0000269" key="15">
    <source>
    </source>
</evidence>
<evidence type="ECO:0000269" key="16">
    <source>
    </source>
</evidence>
<evidence type="ECO:0000269" key="17">
    <source>
    </source>
</evidence>
<evidence type="ECO:0000269" key="18">
    <source>
    </source>
</evidence>
<evidence type="ECO:0000269" key="19">
    <source>
    </source>
</evidence>
<evidence type="ECO:0000269" key="20">
    <source>
    </source>
</evidence>
<evidence type="ECO:0000269" key="21">
    <source>
    </source>
</evidence>
<evidence type="ECO:0000269" key="22">
    <source>
    </source>
</evidence>
<evidence type="ECO:0000303" key="23">
    <source>
    </source>
</evidence>
<evidence type="ECO:0000303" key="24">
    <source>
    </source>
</evidence>
<evidence type="ECO:0000303" key="25">
    <source>
    </source>
</evidence>
<evidence type="ECO:0000303" key="26">
    <source>
    </source>
</evidence>
<evidence type="ECO:0000303" key="27">
    <source>
    </source>
</evidence>
<evidence type="ECO:0000303" key="28">
    <source ref="4"/>
</evidence>
<evidence type="ECO:0000305" key="29"/>
<evidence type="ECO:0000305" key="30">
    <source>
    </source>
</evidence>
<evidence type="ECO:0000305" key="31">
    <source>
    </source>
</evidence>
<evidence type="ECO:0000312" key="32">
    <source>
        <dbReference type="HGNC" id="HGNC:10972"/>
    </source>
</evidence>
<dbReference type="EMBL" id="AF097491">
    <property type="protein sequence ID" value="AAD19357.1"/>
    <property type="status" value="ALT_FRAME"/>
    <property type="molecule type" value="mRNA"/>
</dbReference>
<dbReference type="EMBL" id="AB042505">
    <property type="protein sequence ID" value="BAB47393.1"/>
    <property type="molecule type" value="mRNA"/>
</dbReference>
<dbReference type="EMBL" id="AK298341">
    <property type="protein sequence ID" value="BAG60589.1"/>
    <property type="molecule type" value="mRNA"/>
</dbReference>
<dbReference type="EMBL" id="AB209692">
    <property type="protein sequence ID" value="BAD92929.1"/>
    <property type="status" value="ALT_INIT"/>
    <property type="molecule type" value="mRNA"/>
</dbReference>
<dbReference type="EMBL" id="AP001858">
    <property type="status" value="NOT_ANNOTATED_CDS"/>
    <property type="molecule type" value="Genomic_DNA"/>
</dbReference>
<dbReference type="EMBL" id="BC022387">
    <property type="protein sequence ID" value="AAH22387.1"/>
    <property type="molecule type" value="mRNA"/>
</dbReference>
<dbReference type="CCDS" id="CCDS53643.1">
    <molecule id="Q8TCC7-5"/>
</dbReference>
<dbReference type="CCDS" id="CCDS53644.1">
    <molecule id="Q8TCC7-4"/>
</dbReference>
<dbReference type="CCDS" id="CCDS8042.1">
    <molecule id="Q8TCC7-1"/>
</dbReference>
<dbReference type="RefSeq" id="NP_001171661.1">
    <molecule id="Q8TCC7-1"/>
    <property type="nucleotide sequence ID" value="NM_001184732.2"/>
</dbReference>
<dbReference type="RefSeq" id="NP_001171662.1">
    <molecule id="Q8TCC7-4"/>
    <property type="nucleotide sequence ID" value="NM_001184733.2"/>
</dbReference>
<dbReference type="RefSeq" id="NP_001171665.1">
    <molecule id="Q8TCC7-5"/>
    <property type="nucleotide sequence ID" value="NM_001184736.2"/>
</dbReference>
<dbReference type="RefSeq" id="NP_004245.2">
    <molecule id="Q8TCC7-1"/>
    <property type="nucleotide sequence ID" value="NM_004254.3"/>
</dbReference>
<dbReference type="RefSeq" id="XP_011543666.1">
    <property type="nucleotide sequence ID" value="XM_011545364.1"/>
</dbReference>
<dbReference type="SMR" id="Q8TCC7"/>
<dbReference type="BioGRID" id="114777">
    <property type="interactions" value="23"/>
</dbReference>
<dbReference type="CORUM" id="Q8TCC7"/>
<dbReference type="FunCoup" id="Q8TCC7">
    <property type="interactions" value="52"/>
</dbReference>
<dbReference type="IntAct" id="Q8TCC7">
    <property type="interactions" value="20"/>
</dbReference>
<dbReference type="STRING" id="9606.ENSP00000337335"/>
<dbReference type="BindingDB" id="Q8TCC7"/>
<dbReference type="ChEMBL" id="CHEMBL1641348"/>
<dbReference type="DrugBank" id="DB14973">
    <property type="generic name" value="Abrocitinib"/>
</dbReference>
<dbReference type="DrugBank" id="DB00945">
    <property type="generic name" value="Acetylsalicylic acid"/>
</dbReference>
<dbReference type="DrugBank" id="DB00787">
    <property type="generic name" value="Acyclovir"/>
</dbReference>
<dbReference type="DrugBank" id="DB00437">
    <property type="generic name" value="Allopurinol"/>
</dbReference>
<dbReference type="DrugBank" id="DB00345">
    <property type="generic name" value="Aminohippuric acid"/>
</dbReference>
<dbReference type="DrugBank" id="DB11901">
    <property type="generic name" value="Apalutamide"/>
</dbReference>
<dbReference type="DrugBank" id="DB09274">
    <property type="generic name" value="Artesunate"/>
</dbReference>
<dbReference type="DrugBank" id="DB00168">
    <property type="generic name" value="Aspartame"/>
</dbReference>
<dbReference type="DrugBank" id="DB05016">
    <property type="generic name" value="Ataluren"/>
</dbReference>
<dbReference type="DrugBank" id="DB11995">
    <property type="generic name" value="Avatrombopag"/>
</dbReference>
<dbReference type="DrugBank" id="DB09060">
    <property type="generic name" value="Avibactam"/>
</dbReference>
<dbReference type="DrugBank" id="DB11817">
    <property type="generic name" value="Baricitinib"/>
</dbReference>
<dbReference type="DrugBank" id="DB03793">
    <property type="generic name" value="Benzoic acid"/>
</dbReference>
<dbReference type="DrugBank" id="DB01053">
    <property type="generic name" value="Benzylpenicillin"/>
</dbReference>
<dbReference type="DrugBank" id="DB14669">
    <property type="generic name" value="Betamethasone phosphate"/>
</dbReference>
<dbReference type="DrugBank" id="DB12151">
    <property type="generic name" value="Brincidofovir"/>
</dbReference>
<dbReference type="DrugBank" id="DB01222">
    <property type="generic name" value="Budesonide"/>
</dbReference>
<dbReference type="DrugBank" id="DB00887">
    <property type="generic name" value="Bumetanide"/>
</dbReference>
<dbReference type="DrugBank" id="DB11751">
    <property type="generic name" value="Cabotegravir"/>
</dbReference>
<dbReference type="DrugBank" id="DB12218">
    <property type="generic name" value="Capivasertib"/>
</dbReference>
<dbReference type="DrugBank" id="DB04519">
    <property type="generic name" value="Caprylic acid"/>
</dbReference>
<dbReference type="DrugBank" id="DB01414">
    <property type="generic name" value="Cefacetrile"/>
</dbReference>
<dbReference type="DrugBank" id="DB00833">
    <property type="generic name" value="Cefaclor"/>
</dbReference>
<dbReference type="DrugBank" id="DB01140">
    <property type="generic name" value="Cefadroxil"/>
</dbReference>
<dbReference type="DrugBank" id="DB09008">
    <property type="generic name" value="Cefaloridine"/>
</dbReference>
<dbReference type="DrugBank" id="DB00456">
    <property type="generic name" value="Cefalotin"/>
</dbReference>
<dbReference type="DrugBank" id="DB01326">
    <property type="generic name" value="Cefamandole"/>
</dbReference>
<dbReference type="DrugBank" id="DB01327">
    <property type="generic name" value="Cefazolin"/>
</dbReference>
<dbReference type="DrugBank" id="DB00535">
    <property type="generic name" value="Cefdinir"/>
</dbReference>
<dbReference type="DrugBank" id="DB00671">
    <property type="generic name" value="Cefixime"/>
</dbReference>
<dbReference type="DrugBank" id="DB01329">
    <property type="generic name" value="Cefoperazone"/>
</dbReference>
<dbReference type="DrugBank" id="DB00493">
    <property type="generic name" value="Cefotaxime"/>
</dbReference>
<dbReference type="DrugBank" id="DB00229">
    <property type="generic name" value="Cefotiam"/>
</dbReference>
<dbReference type="DrugBank" id="DB01415">
    <property type="generic name" value="Ceftibuten"/>
</dbReference>
<dbReference type="DrugBank" id="DB01332">
    <property type="generic name" value="Ceftizoxime"/>
</dbReference>
<dbReference type="DrugBank" id="DB01212">
    <property type="generic name" value="Ceftriaxone"/>
</dbReference>
<dbReference type="DrugBank" id="DB00567">
    <property type="generic name" value="Cephalexin"/>
</dbReference>
<dbReference type="DrugBank" id="DB02659">
    <property type="generic name" value="Cholic Acid"/>
</dbReference>
<dbReference type="DrugBank" id="DB01597">
    <property type="generic name" value="Cilastatin"/>
</dbReference>
<dbReference type="DrugBank" id="DB00501">
    <property type="generic name" value="Cimetidine"/>
</dbReference>
<dbReference type="DrugBank" id="DB01147">
    <property type="generic name" value="Cloxacillin"/>
</dbReference>
<dbReference type="DrugBank" id="DB00286">
    <property type="generic name" value="Conjugated estrogens"/>
</dbReference>
<dbReference type="DrugBank" id="DB01380">
    <property type="generic name" value="Cortisone acetate"/>
</dbReference>
<dbReference type="DrugBank" id="DB02527">
    <property type="generic name" value="Cyclic adenosine monophosphate"/>
</dbReference>
<dbReference type="DrugBank" id="DB08912">
    <property type="generic name" value="Dabrafenib"/>
</dbReference>
<dbReference type="DrugBank" id="DB11682">
    <property type="generic name" value="Daprodustat"/>
</dbReference>
<dbReference type="DrugBank" id="DB04133">
    <property type="generic name" value="Degraded Cephaloridine"/>
</dbReference>
<dbReference type="DrugBank" id="DB16133">
    <property type="generic name" value="Delgocitinib"/>
</dbReference>
<dbReference type="DrugBank" id="DB18847">
    <property type="generic name" value="Deuruxolitinib"/>
</dbReference>
<dbReference type="DrugBank" id="DB01234">
    <property type="generic name" value="Dexamethasone"/>
</dbReference>
<dbReference type="DrugBank" id="DB14649">
    <property type="generic name" value="Dexamethasone acetate"/>
</dbReference>
<dbReference type="DrugBank" id="DB09213">
    <property type="generic name" value="Dexibuprofen"/>
</dbReference>
<dbReference type="DrugBank" id="DB00586">
    <property type="generic name" value="Diclofenac"/>
</dbReference>
<dbReference type="DrugBank" id="DB01160">
    <property type="generic name" value="Dinoprost tromethamine"/>
</dbReference>
<dbReference type="DrugBank" id="DB00917">
    <property type="generic name" value="Dinoprostone"/>
</dbReference>
<dbReference type="DrugBank" id="DB08930">
    <property type="generic name" value="Dolutegravir"/>
</dbReference>
<dbReference type="DrugBank" id="DB06211">
    <property type="generic name" value="Doripenem"/>
</dbReference>
<dbReference type="DrugBank" id="DB04855">
    <property type="generic name" value="Dronedarone"/>
</dbReference>
<dbReference type="DrugBank" id="DB12243">
    <property type="generic name" value="Edaravone"/>
</dbReference>
<dbReference type="DrugBank" id="DB09272">
    <property type="generic name" value="Eluxadoline"/>
</dbReference>
<dbReference type="DrugBank" id="DB09038">
    <property type="generic name" value="Empagliflozin"/>
</dbReference>
<dbReference type="DrugBank" id="DB00584">
    <property type="generic name" value="Enalapril"/>
</dbReference>
<dbReference type="DrugBank" id="DB13874">
    <property type="generic name" value="Enasidenib"/>
</dbReference>
<dbReference type="DrugBank" id="DB11718">
    <property type="generic name" value="Encorafenib"/>
</dbReference>
<dbReference type="DrugBank" id="DB00736">
    <property type="generic name" value="Esomeprazole"/>
</dbReference>
<dbReference type="DrugBank" id="DB00783">
    <property type="generic name" value="Estradiol"/>
</dbReference>
<dbReference type="DrugBank" id="DB13952">
    <property type="generic name" value="Estradiol acetate"/>
</dbReference>
<dbReference type="DrugBank" id="DB13953">
    <property type="generic name" value="Estradiol benzoate"/>
</dbReference>
<dbReference type="DrugBank" id="DB13954">
    <property type="generic name" value="Estradiol cypionate"/>
</dbReference>
<dbReference type="DrugBank" id="DB13955">
    <property type="generic name" value="Estradiol dienanthate"/>
</dbReference>
<dbReference type="DrugBank" id="DB13956">
    <property type="generic name" value="Estradiol valerate"/>
</dbReference>
<dbReference type="DrugBank" id="DB00655">
    <property type="generic name" value="Estrone"/>
</dbReference>
<dbReference type="DrugBank" id="DB00927">
    <property type="generic name" value="Famotidine"/>
</dbReference>
<dbReference type="DrugBank" id="DB12466">
    <property type="generic name" value="Favipiravir"/>
</dbReference>
<dbReference type="DrugBank" id="DB12265">
    <property type="generic name" value="Fexinidazole"/>
</dbReference>
<dbReference type="DrugBank" id="DB00950">
    <property type="generic name" value="Fexofenadine"/>
</dbReference>
<dbReference type="DrugBank" id="DB00693">
    <property type="generic name" value="Fluorescein"/>
</dbReference>
<dbReference type="DrugBank" id="DB00695">
    <property type="generic name" value="Furosemide"/>
</dbReference>
<dbReference type="DrugBank" id="DB01004">
    <property type="generic name" value="Ganciclovir"/>
</dbReference>
<dbReference type="DrugBank" id="DB01241">
    <property type="generic name" value="Gemfibrozil"/>
</dbReference>
<dbReference type="DrugBank" id="DB03553">
    <property type="generic name" value="Glutaric Acid"/>
</dbReference>
<dbReference type="DrugBank" id="DB00536">
    <property type="generic name" value="Guanidine"/>
</dbReference>
<dbReference type="DrugBank" id="DB00999">
    <property type="generic name" value="Hydrochlorothiazide"/>
</dbReference>
<dbReference type="DrugBank" id="DB00741">
    <property type="generic name" value="Hydrocortisone"/>
</dbReference>
<dbReference type="DrugBank" id="DB14538">
    <property type="generic name" value="Hydrocortisone aceponate"/>
</dbReference>
<dbReference type="DrugBank" id="DB14539">
    <property type="generic name" value="Hydrocortisone acetate"/>
</dbReference>
<dbReference type="DrugBank" id="DB14540">
    <property type="generic name" value="Hydrocortisone butyrate"/>
</dbReference>
<dbReference type="DrugBank" id="DB14541">
    <property type="generic name" value="Hydrocortisone cypionate"/>
</dbReference>
<dbReference type="DrugBank" id="DB14542">
    <property type="generic name" value="Hydrocortisone phosphate"/>
</dbReference>
<dbReference type="DrugBank" id="DB14543">
    <property type="generic name" value="Hydrocortisone probutate"/>
</dbReference>
<dbReference type="DrugBank" id="DB14544">
    <property type="generic name" value="Hydrocortisone valerate"/>
</dbReference>
<dbReference type="DrugBank" id="DB00774">
    <property type="generic name" value="Hydroflumethiazide"/>
</dbReference>
<dbReference type="DrugBank" id="DB01050">
    <property type="generic name" value="Ibuprofen"/>
</dbReference>
<dbReference type="DrugBank" id="DB00328">
    <property type="generic name" value="Indomethacin"/>
</dbReference>
<dbReference type="DrugBank" id="DB16084">
    <property type="generic name" value="Iron (III) oxide adipate"/>
</dbReference>
<dbReference type="DrugBank" id="DB14568">
    <property type="generic name" value="Ivosidenib"/>
</dbReference>
<dbReference type="DrugBank" id="DB01009">
    <property type="generic name" value="Ketoprofen"/>
</dbReference>
<dbReference type="DrugBank" id="DB16956">
    <property type="generic name" value="L-Acetylleucine"/>
</dbReference>
<dbReference type="DrugBank" id="DB00448">
    <property type="generic name" value="Lansoprazole"/>
</dbReference>
<dbReference type="DrugBank" id="DB00654">
    <property type="generic name" value="Latanoprost"/>
</dbReference>
<dbReference type="DrugBank" id="DB09078">
    <property type="generic name" value="Lenvatinib"/>
</dbReference>
<dbReference type="DrugBank" id="DB12070">
    <property type="generic name" value="Letermovir"/>
</dbReference>
<dbReference type="DrugBank" id="DB00650">
    <property type="generic name" value="Leucovorin"/>
</dbReference>
<dbReference type="DrugBank" id="DB00583">
    <property type="generic name" value="Levocarnitine"/>
</dbReference>
<dbReference type="DrugBank" id="DB00601">
    <property type="generic name" value="Linezolid"/>
</dbReference>
<dbReference type="DrugBank" id="DB17083">
    <property type="generic name" value="Linzagolix"/>
</dbReference>
<dbReference type="DrugBank" id="DB00279">
    <property type="generic name" value="Liothyronine"/>
</dbReference>
<dbReference type="DrugBank" id="DB01583">
    <property type="generic name" value="Liotrix"/>
</dbReference>
<dbReference type="DrugBank" id="DB00253">
    <property type="generic name" value="Medrysone"/>
</dbReference>
<dbReference type="DrugBank" id="DB01065">
    <property type="generic name" value="Melatonin"/>
</dbReference>
<dbReference type="DrugBank" id="DB01033">
    <property type="generic name" value="Mercaptopurine"/>
</dbReference>
<dbReference type="DrugBank" id="DB00563">
    <property type="generic name" value="Methotrexate"/>
</dbReference>
<dbReference type="DrugBank" id="DB06710">
    <property type="generic name" value="Methyltestosterone"/>
</dbReference>
<dbReference type="DrugBank" id="DB00788">
    <property type="generic name" value="Naproxen"/>
</dbReference>
<dbReference type="DrugBank" id="DB01051">
    <property type="generic name" value="Novobiocin"/>
</dbReference>
<dbReference type="DrugBank" id="DB01250">
    <property type="generic name" value="Olsalazine"/>
</dbReference>
<dbReference type="DrugBank" id="DB16267">
    <property type="generic name" value="Olutasidenib"/>
</dbReference>
<dbReference type="DrugBank" id="DB00198">
    <property type="generic name" value="Oseltamivir"/>
</dbReference>
<dbReference type="DrugBank" id="DB11837">
    <property type="generic name" value="Osilodrostat"/>
</dbReference>
<dbReference type="DrugBank" id="DB01092">
    <property type="generic name" value="Ouabain"/>
</dbReference>
<dbReference type="DrugBank" id="DB03902">
    <property type="generic name" value="Oxalic Acid"/>
</dbReference>
<dbReference type="DrugBank" id="DB00595">
    <property type="generic name" value="Oxytetracycline"/>
</dbReference>
<dbReference type="DrugBank" id="DB00213">
    <property type="generic name" value="Pantoprazole"/>
</dbReference>
<dbReference type="DrugBank" id="DB00642">
    <property type="generic name" value="Pemetrexed"/>
</dbReference>
<dbReference type="DrugBank" id="DB00812">
    <property type="generic name" value="Phenylbutazone"/>
</dbReference>
<dbReference type="DrugBank" id="DB00319">
    <property type="generic name" value="Piperacillin"/>
</dbReference>
<dbReference type="DrugBank" id="DB00554">
    <property type="generic name" value="Piroxicam"/>
</dbReference>
<dbReference type="DrugBank" id="DB01324">
    <property type="generic name" value="Polythiazide"/>
</dbReference>
<dbReference type="DrugBank" id="DB12866">
    <property type="generic name" value="Pradigastat"/>
</dbReference>
<dbReference type="DrugBank" id="DB05804">
    <property type="generic name" value="Prasterone sulfate"/>
</dbReference>
<dbReference type="DrugBank" id="DB00175">
    <property type="generic name" value="Pravastatin"/>
</dbReference>
<dbReference type="DrugBank" id="DB14631">
    <property type="generic name" value="Prednisolone phosphate"/>
</dbReference>
<dbReference type="DrugBank" id="DB05154">
    <property type="generic name" value="Pretomanid"/>
</dbReference>
<dbReference type="DrugBank" id="DB01032">
    <property type="generic name" value="Probenecid"/>
</dbReference>
<dbReference type="DrugBank" id="DB00881">
    <property type="generic name" value="Quinapril"/>
</dbReference>
<dbReference type="DrugBank" id="DB00908">
    <property type="generic name" value="Quinidine"/>
</dbReference>
<dbReference type="DrugBank" id="DB00863">
    <property type="generic name" value="Ranitidine"/>
</dbReference>
<dbReference type="DrugBank" id="DB12377">
    <property type="generic name" value="Relebactam"/>
</dbReference>
<dbReference type="DrugBank" id="DB12914">
    <property type="generic name" value="Resmetirom"/>
</dbReference>
<dbReference type="DrugBank" id="DB18515">
    <property type="generic name" value="Revumenib"/>
</dbReference>
<dbReference type="DrugBank" id="DB01045">
    <property type="generic name" value="Rifampin"/>
</dbReference>
<dbReference type="DrugBank" id="DB12457">
    <property type="generic name" value="Rimegepant"/>
</dbReference>
<dbReference type="DrugBank" id="DB01098">
    <property type="generic name" value="Rosuvastatin"/>
</dbReference>
<dbReference type="DrugBank" id="DB04847">
    <property type="generic name" value="Roxadustat"/>
</dbReference>
<dbReference type="DrugBank" id="DB12332">
    <property type="generic name" value="Rucaparib"/>
</dbReference>
<dbReference type="DrugBank" id="DB00936">
    <property type="generic name" value="Salicylic acid"/>
</dbReference>
<dbReference type="DrugBank" id="DB06335">
    <property type="generic name" value="Saxagliptin"/>
</dbReference>
<dbReference type="DrugBank" id="DB12390">
    <property type="generic name" value="Seladelpar"/>
</dbReference>
<dbReference type="DrugBank" id="DB01261">
    <property type="generic name" value="Sitagliptin"/>
</dbReference>
<dbReference type="DrugBank" id="DB12548">
    <property type="generic name" value="Sparsentan"/>
</dbReference>
<dbReference type="DrugBank" id="DB00139">
    <property type="generic name" value="Succinic acid"/>
</dbReference>
<dbReference type="DrugBank" id="DB16335">
    <property type="generic name" value="Sulopenem etzadroxil"/>
</dbReference>
<dbReference type="DrugBank" id="DB11644">
    <property type="generic name" value="Tafamidis"/>
</dbReference>
<dbReference type="DrugBank" id="DB04348">
    <property type="generic name" value="Taurocholic acid"/>
</dbReference>
<dbReference type="DrugBank" id="DB01606">
    <property type="generic name" value="Tazobactam"/>
</dbReference>
<dbReference type="DrugBank" id="DB14126">
    <property type="generic name" value="Tenofovir"/>
</dbReference>
<dbReference type="DrugBank" id="DB09299">
    <property type="generic name" value="Tenofovir alafenamide"/>
</dbReference>
<dbReference type="DrugBank" id="DB00300">
    <property type="generic name" value="Tenofovir disoproxil"/>
</dbReference>
<dbReference type="DrugBank" id="DB00469">
    <property type="generic name" value="Tenoxicam"/>
</dbReference>
<dbReference type="DrugBank" id="DB00624">
    <property type="generic name" value="Testosterone"/>
</dbReference>
<dbReference type="DrugBank" id="DB13943">
    <property type="generic name" value="Testosterone cypionate"/>
</dbReference>
<dbReference type="DrugBank" id="DB13944">
    <property type="generic name" value="Testosterone enanthate"/>
</dbReference>
<dbReference type="DrugBank" id="DB13946">
    <property type="generic name" value="Testosterone undecanoate"/>
</dbReference>
<dbReference type="DrugBank" id="DB00759">
    <property type="generic name" value="Tetracycline"/>
</dbReference>
<dbReference type="DrugBank" id="DB08837">
    <property type="generic name" value="Tetraethylammonium"/>
</dbReference>
<dbReference type="DrugBank" id="DB11712">
    <property type="generic name" value="Tezacaftor"/>
</dbReference>
<dbReference type="DrugBank" id="DB01685">
    <property type="generic name" value="Topiroxostat"/>
</dbReference>
<dbReference type="DrugBank" id="DB01650">
    <property type="generic name" value="trans-2-hydroxycinnamic acid"/>
</dbReference>
<dbReference type="DrugBank" id="DB08844">
    <property type="generic name" value="Uric acid"/>
</dbReference>
<dbReference type="DrugBank" id="DB12255">
    <property type="generic name" value="Vadadustat"/>
</dbReference>
<dbReference type="DrugBank" id="DB00577">
    <property type="generic name" value="Valaciclovir"/>
</dbReference>
<dbReference type="DrugBank" id="DB00313">
    <property type="generic name" value="Valproic acid"/>
</dbReference>
<dbReference type="DrugBank" id="DB00495">
    <property type="generic name" value="Zidovudine"/>
</dbReference>
<dbReference type="DrugCentral" id="Q8TCC7"/>
<dbReference type="GuidetoPHARMACOLOGY" id="1027"/>
<dbReference type="TCDB" id="2.A.1.19.34">
    <property type="family name" value="the major facilitator superfamily (mfs)"/>
</dbReference>
<dbReference type="GlyCosmos" id="Q8TCC7">
    <property type="glycosylation" value="2 sites, No reported glycans"/>
</dbReference>
<dbReference type="GlyGen" id="Q8TCC7">
    <property type="glycosylation" value="2 sites, 26 N-linked glycans (1 site)"/>
</dbReference>
<dbReference type="iPTMnet" id="Q8TCC7"/>
<dbReference type="PhosphoSitePlus" id="Q8TCC7"/>
<dbReference type="SwissPalm" id="Q8TCC7"/>
<dbReference type="BioMuta" id="SLC22A8"/>
<dbReference type="DMDM" id="74730587"/>
<dbReference type="jPOST" id="Q8TCC7"/>
<dbReference type="MassIVE" id="Q8TCC7"/>
<dbReference type="PaxDb" id="9606-ENSP00000337335"/>
<dbReference type="PeptideAtlas" id="Q8TCC7"/>
<dbReference type="ProteomicsDB" id="24057"/>
<dbReference type="ProteomicsDB" id="26892"/>
<dbReference type="ProteomicsDB" id="74117">
    <molecule id="Q8TCC7-1"/>
</dbReference>
<dbReference type="ProteomicsDB" id="74118">
    <molecule id="Q8TCC7-2"/>
</dbReference>
<dbReference type="ProteomicsDB" id="74119">
    <molecule id="Q8TCC7-3"/>
</dbReference>
<dbReference type="Antibodypedia" id="28883">
    <property type="antibodies" value="187 antibodies from 27 providers"/>
</dbReference>
<dbReference type="DNASU" id="9376"/>
<dbReference type="Ensembl" id="ENST00000336232.7">
    <molecule id="Q8TCC7-1"/>
    <property type="protein sequence ID" value="ENSP00000337335.2"/>
    <property type="gene ID" value="ENSG00000149452.16"/>
</dbReference>
<dbReference type="Ensembl" id="ENST00000430500.6">
    <molecule id="Q8TCC7-1"/>
    <property type="protein sequence ID" value="ENSP00000398548.2"/>
    <property type="gene ID" value="ENSG00000149452.16"/>
</dbReference>
<dbReference type="Ensembl" id="ENST00000535878.5">
    <molecule id="Q8TCC7-5"/>
    <property type="protein sequence ID" value="ENSP00000443368.1"/>
    <property type="gene ID" value="ENSG00000149452.16"/>
</dbReference>
<dbReference type="Ensembl" id="ENST00000545207.5">
    <molecule id="Q8TCC7-4"/>
    <property type="protein sequence ID" value="ENSP00000441658.1"/>
    <property type="gene ID" value="ENSG00000149452.16"/>
</dbReference>
<dbReference type="GeneID" id="9376"/>
<dbReference type="KEGG" id="hsa:9376"/>
<dbReference type="MANE-Select" id="ENST00000336232.7">
    <property type="protein sequence ID" value="ENSP00000337335.2"/>
    <property type="RefSeq nucleotide sequence ID" value="NM_004254.4"/>
    <property type="RefSeq protein sequence ID" value="NP_004245.2"/>
</dbReference>
<dbReference type="UCSC" id="uc001nwo.4">
    <molecule id="Q8TCC7-1"/>
    <property type="organism name" value="human"/>
</dbReference>
<dbReference type="AGR" id="HGNC:10972"/>
<dbReference type="CTD" id="9376"/>
<dbReference type="DisGeNET" id="9376"/>
<dbReference type="GeneCards" id="SLC22A8"/>
<dbReference type="HGNC" id="HGNC:10972">
    <property type="gene designation" value="SLC22A8"/>
</dbReference>
<dbReference type="HPA" id="ENSG00000149452">
    <property type="expression patterns" value="Group enriched (choroid plexus, kidney)"/>
</dbReference>
<dbReference type="MalaCards" id="SLC22A8"/>
<dbReference type="MIM" id="607581">
    <property type="type" value="gene"/>
</dbReference>
<dbReference type="neXtProt" id="NX_Q8TCC7"/>
<dbReference type="OpenTargets" id="ENSG00000149452"/>
<dbReference type="PharmGKB" id="PA389"/>
<dbReference type="VEuPathDB" id="HostDB:ENSG00000149452"/>
<dbReference type="eggNOG" id="KOG0255">
    <property type="taxonomic scope" value="Eukaryota"/>
</dbReference>
<dbReference type="GeneTree" id="ENSGT00940000154901"/>
<dbReference type="HOGENOM" id="CLU_001265_33_3_1"/>
<dbReference type="InParanoid" id="Q8TCC7"/>
<dbReference type="OMA" id="CGGLMPN"/>
<dbReference type="OrthoDB" id="2544694at2759"/>
<dbReference type="PAN-GO" id="Q8TCC7">
    <property type="GO annotations" value="0 GO annotations based on evolutionary models"/>
</dbReference>
<dbReference type="PhylomeDB" id="Q8TCC7"/>
<dbReference type="TreeFam" id="TF315847"/>
<dbReference type="PathwayCommons" id="Q8TCC7"/>
<dbReference type="Reactome" id="R-HSA-561048">
    <property type="pathway name" value="Organic anion transport"/>
</dbReference>
<dbReference type="Reactome" id="R-HSA-9793528">
    <property type="pathway name" value="Ciprofloxacin ADME"/>
</dbReference>
<dbReference type="SABIO-RK" id="Q8TCC7"/>
<dbReference type="SignaLink" id="Q8TCC7"/>
<dbReference type="BioGRID-ORCS" id="9376">
    <property type="hits" value="17 hits in 1153 CRISPR screens"/>
</dbReference>
<dbReference type="GeneWiki" id="SLC22A8"/>
<dbReference type="GenomeRNAi" id="9376"/>
<dbReference type="Pharos" id="Q8TCC7">
    <property type="development level" value="Tclin"/>
</dbReference>
<dbReference type="PRO" id="PR:Q8TCC7"/>
<dbReference type="Proteomes" id="UP000005640">
    <property type="component" value="Chromosome 11"/>
</dbReference>
<dbReference type="RNAct" id="Q8TCC7">
    <property type="molecule type" value="protein"/>
</dbReference>
<dbReference type="Bgee" id="ENSG00000149452">
    <property type="expression patterns" value="Expressed in pigmented layer of retina and 66 other cell types or tissues"/>
</dbReference>
<dbReference type="ExpressionAtlas" id="Q8TCC7">
    <property type="expression patterns" value="baseline and differential"/>
</dbReference>
<dbReference type="GO" id="GO:0016324">
    <property type="term" value="C:apical plasma membrane"/>
    <property type="evidence" value="ECO:0000314"/>
    <property type="project" value="ARUK-UCL"/>
</dbReference>
<dbReference type="GO" id="GO:0016323">
    <property type="term" value="C:basolateral plasma membrane"/>
    <property type="evidence" value="ECO:0000314"/>
    <property type="project" value="UniProtKB"/>
</dbReference>
<dbReference type="GO" id="GO:0070062">
    <property type="term" value="C:extracellular exosome"/>
    <property type="evidence" value="ECO:0007005"/>
    <property type="project" value="UniProtKB"/>
</dbReference>
<dbReference type="GO" id="GO:0005886">
    <property type="term" value="C:plasma membrane"/>
    <property type="evidence" value="ECO:0000304"/>
    <property type="project" value="Reactome"/>
</dbReference>
<dbReference type="GO" id="GO:0008514">
    <property type="term" value="F:organic anion transmembrane transporter activity"/>
    <property type="evidence" value="ECO:0000314"/>
    <property type="project" value="UniProtKB"/>
</dbReference>
<dbReference type="GO" id="GO:0015132">
    <property type="term" value="F:prostaglandin transmembrane transporter activity"/>
    <property type="evidence" value="ECO:0000314"/>
    <property type="project" value="UniProtKB"/>
</dbReference>
<dbReference type="GO" id="GO:0005452">
    <property type="term" value="F:solute:inorganic anion antiporter activity"/>
    <property type="evidence" value="ECO:0000314"/>
    <property type="project" value="UniProtKB"/>
</dbReference>
<dbReference type="GO" id="GO:0042910">
    <property type="term" value="F:xenobiotic transmembrane transporter activity"/>
    <property type="evidence" value="ECO:0000314"/>
    <property type="project" value="UniProtKB"/>
</dbReference>
<dbReference type="GO" id="GO:0006811">
    <property type="term" value="P:monoatomic ion transport"/>
    <property type="evidence" value="ECO:0007669"/>
    <property type="project" value="UniProtKB-KW"/>
</dbReference>
<dbReference type="GO" id="GO:0015711">
    <property type="term" value="P:organic anion transport"/>
    <property type="evidence" value="ECO:0000318"/>
    <property type="project" value="GO_Central"/>
</dbReference>
<dbReference type="GO" id="GO:0015732">
    <property type="term" value="P:prostaglandin transport"/>
    <property type="evidence" value="ECO:0000314"/>
    <property type="project" value="UniProtKB"/>
</dbReference>
<dbReference type="GO" id="GO:0009636">
    <property type="term" value="P:response to toxic substance"/>
    <property type="evidence" value="ECO:0007669"/>
    <property type="project" value="UniProtKB-KW"/>
</dbReference>
<dbReference type="GO" id="GO:0150104">
    <property type="term" value="P:transport across blood-brain barrier"/>
    <property type="evidence" value="ECO:0000303"/>
    <property type="project" value="ARUK-UCL"/>
</dbReference>
<dbReference type="FunFam" id="1.20.1250.20:FF:000023">
    <property type="entry name" value="Solute carrier family 22 member 6"/>
    <property type="match status" value="1"/>
</dbReference>
<dbReference type="Gene3D" id="1.20.1250.20">
    <property type="entry name" value="MFS general substrate transporter like domains"/>
    <property type="match status" value="1"/>
</dbReference>
<dbReference type="InterPro" id="IPR020846">
    <property type="entry name" value="MFS_dom"/>
</dbReference>
<dbReference type="InterPro" id="IPR005828">
    <property type="entry name" value="MFS_sugar_transport-like"/>
</dbReference>
<dbReference type="InterPro" id="IPR036259">
    <property type="entry name" value="MFS_trans_sf"/>
</dbReference>
<dbReference type="InterPro" id="IPR004749">
    <property type="entry name" value="Orgcat_transp/SVOP"/>
</dbReference>
<dbReference type="InterPro" id="IPR005829">
    <property type="entry name" value="Sugar_transporter_CS"/>
</dbReference>
<dbReference type="NCBIfam" id="TIGR00898">
    <property type="entry name" value="2A0119"/>
    <property type="match status" value="1"/>
</dbReference>
<dbReference type="PANTHER" id="PTHR24064">
    <property type="entry name" value="SOLUTE CARRIER FAMILY 22 MEMBER"/>
    <property type="match status" value="1"/>
</dbReference>
<dbReference type="Pfam" id="PF00083">
    <property type="entry name" value="Sugar_tr"/>
    <property type="match status" value="1"/>
</dbReference>
<dbReference type="SUPFAM" id="SSF103473">
    <property type="entry name" value="MFS general substrate transporter"/>
    <property type="match status" value="1"/>
</dbReference>
<dbReference type="PROSITE" id="PS50850">
    <property type="entry name" value="MFS"/>
    <property type="match status" value="1"/>
</dbReference>
<reference key="1">
    <citation type="journal article" date="1999" name="Biochem. Biophys. Res. Commun.">
        <title>Molecular cloning and characterization of two novel human renal organic anion transporters (hOAT1 and hOAT3).</title>
        <authorList>
            <person name="Race J.E."/>
            <person name="Grassl S.M."/>
            <person name="Williams W.J."/>
            <person name="Holtzman E.J."/>
        </authorList>
    </citation>
    <scope>NUCLEOTIDE SEQUENCE [MRNA] (ISOFORM 2)</scope>
    <source>
        <tissue>Kidney</tissue>
    </source>
</reference>
<reference key="2">
    <citation type="submission" date="2000-05" db="EMBL/GenBank/DDBJ databases">
        <title>Molecular cloning and characterization of human organic anion transporter 3.</title>
        <authorList>
            <person name="Cha S."/>
            <person name="Sekine T."/>
            <person name="Kanai Y."/>
            <person name="Endou H."/>
        </authorList>
    </citation>
    <scope>NUCLEOTIDE SEQUENCE [MRNA] (ISOFORM 1)</scope>
    <source>
        <tissue>Kidney</tissue>
    </source>
</reference>
<reference key="3">
    <citation type="journal article" date="2004" name="Nat. Genet.">
        <title>Complete sequencing and characterization of 21,243 full-length human cDNAs.</title>
        <authorList>
            <person name="Ota T."/>
            <person name="Suzuki Y."/>
            <person name="Nishikawa T."/>
            <person name="Otsuki T."/>
            <person name="Sugiyama T."/>
            <person name="Irie R."/>
            <person name="Wakamatsu A."/>
            <person name="Hayashi K."/>
            <person name="Sato H."/>
            <person name="Nagai K."/>
            <person name="Kimura K."/>
            <person name="Makita H."/>
            <person name="Sekine M."/>
            <person name="Obayashi M."/>
            <person name="Nishi T."/>
            <person name="Shibahara T."/>
            <person name="Tanaka T."/>
            <person name="Ishii S."/>
            <person name="Yamamoto J."/>
            <person name="Saito K."/>
            <person name="Kawai Y."/>
            <person name="Isono Y."/>
            <person name="Nakamura Y."/>
            <person name="Nagahari K."/>
            <person name="Murakami K."/>
            <person name="Yasuda T."/>
            <person name="Iwayanagi T."/>
            <person name="Wagatsuma M."/>
            <person name="Shiratori A."/>
            <person name="Sudo H."/>
            <person name="Hosoiri T."/>
            <person name="Kaku Y."/>
            <person name="Kodaira H."/>
            <person name="Kondo H."/>
            <person name="Sugawara M."/>
            <person name="Takahashi M."/>
            <person name="Kanda K."/>
            <person name="Yokoi T."/>
            <person name="Furuya T."/>
            <person name="Kikkawa E."/>
            <person name="Omura Y."/>
            <person name="Abe K."/>
            <person name="Kamihara K."/>
            <person name="Katsuta N."/>
            <person name="Sato K."/>
            <person name="Tanikawa M."/>
            <person name="Yamazaki M."/>
            <person name="Ninomiya K."/>
            <person name="Ishibashi T."/>
            <person name="Yamashita H."/>
            <person name="Murakawa K."/>
            <person name="Fujimori K."/>
            <person name="Tanai H."/>
            <person name="Kimata M."/>
            <person name="Watanabe M."/>
            <person name="Hiraoka S."/>
            <person name="Chiba Y."/>
            <person name="Ishida S."/>
            <person name="Ono Y."/>
            <person name="Takiguchi S."/>
            <person name="Watanabe S."/>
            <person name="Yosida M."/>
            <person name="Hotuta T."/>
            <person name="Kusano J."/>
            <person name="Kanehori K."/>
            <person name="Takahashi-Fujii A."/>
            <person name="Hara H."/>
            <person name="Tanase T.-O."/>
            <person name="Nomura Y."/>
            <person name="Togiya S."/>
            <person name="Komai F."/>
            <person name="Hara R."/>
            <person name="Takeuchi K."/>
            <person name="Arita M."/>
            <person name="Imose N."/>
            <person name="Musashino K."/>
            <person name="Yuuki H."/>
            <person name="Oshima A."/>
            <person name="Sasaki N."/>
            <person name="Aotsuka S."/>
            <person name="Yoshikawa Y."/>
            <person name="Matsunawa H."/>
            <person name="Ichihara T."/>
            <person name="Shiohata N."/>
            <person name="Sano S."/>
            <person name="Moriya S."/>
            <person name="Momiyama H."/>
            <person name="Satoh N."/>
            <person name="Takami S."/>
            <person name="Terashima Y."/>
            <person name="Suzuki O."/>
            <person name="Nakagawa S."/>
            <person name="Senoh A."/>
            <person name="Mizoguchi H."/>
            <person name="Goto Y."/>
            <person name="Shimizu F."/>
            <person name="Wakebe H."/>
            <person name="Hishigaki H."/>
            <person name="Watanabe T."/>
            <person name="Sugiyama A."/>
            <person name="Takemoto M."/>
            <person name="Kawakami B."/>
            <person name="Yamazaki M."/>
            <person name="Watanabe K."/>
            <person name="Kumagai A."/>
            <person name="Itakura S."/>
            <person name="Fukuzumi Y."/>
            <person name="Fujimori Y."/>
            <person name="Komiyama M."/>
            <person name="Tashiro H."/>
            <person name="Tanigami A."/>
            <person name="Fujiwara T."/>
            <person name="Ono T."/>
            <person name="Yamada K."/>
            <person name="Fujii Y."/>
            <person name="Ozaki K."/>
            <person name="Hirao M."/>
            <person name="Ohmori Y."/>
            <person name="Kawabata A."/>
            <person name="Hikiji T."/>
            <person name="Kobatake N."/>
            <person name="Inagaki H."/>
            <person name="Ikema Y."/>
            <person name="Okamoto S."/>
            <person name="Okitani R."/>
            <person name="Kawakami T."/>
            <person name="Noguchi S."/>
            <person name="Itoh T."/>
            <person name="Shigeta K."/>
            <person name="Senba T."/>
            <person name="Matsumura K."/>
            <person name="Nakajima Y."/>
            <person name="Mizuno T."/>
            <person name="Morinaga M."/>
            <person name="Sasaki M."/>
            <person name="Togashi T."/>
            <person name="Oyama M."/>
            <person name="Hata H."/>
            <person name="Watanabe M."/>
            <person name="Komatsu T."/>
            <person name="Mizushima-Sugano J."/>
            <person name="Satoh T."/>
            <person name="Shirai Y."/>
            <person name="Takahashi Y."/>
            <person name="Nakagawa K."/>
            <person name="Okumura K."/>
            <person name="Nagase T."/>
            <person name="Nomura N."/>
            <person name="Kikuchi H."/>
            <person name="Masuho Y."/>
            <person name="Yamashita R."/>
            <person name="Nakai K."/>
            <person name="Yada T."/>
            <person name="Nakamura Y."/>
            <person name="Ohara O."/>
            <person name="Isogai T."/>
            <person name="Sugano S."/>
        </authorList>
    </citation>
    <scope>NUCLEOTIDE SEQUENCE [LARGE SCALE MRNA] (ISOFORM 4)</scope>
    <source>
        <tissue>Kidney</tissue>
    </source>
</reference>
<reference key="4">
    <citation type="submission" date="2005-03" db="EMBL/GenBank/DDBJ databases">
        <authorList>
            <person name="Totoki Y."/>
            <person name="Toyoda A."/>
            <person name="Takeda T."/>
            <person name="Sakaki Y."/>
            <person name="Tanaka A."/>
            <person name="Yokoyama S."/>
            <person name="Ohara O."/>
            <person name="Nagase T."/>
            <person name="Kikuno R.F."/>
        </authorList>
    </citation>
    <scope>NUCLEOTIDE SEQUENCE [LARGE SCALE MRNA] (ISOFORM 3)</scope>
    <source>
        <tissue>Brain</tissue>
    </source>
</reference>
<reference key="5">
    <citation type="journal article" date="2006" name="Nature">
        <title>Human chromosome 11 DNA sequence and analysis including novel gene identification.</title>
        <authorList>
            <person name="Taylor T.D."/>
            <person name="Noguchi H."/>
            <person name="Totoki Y."/>
            <person name="Toyoda A."/>
            <person name="Kuroki Y."/>
            <person name="Dewar K."/>
            <person name="Lloyd C."/>
            <person name="Itoh T."/>
            <person name="Takeda T."/>
            <person name="Kim D.-W."/>
            <person name="She X."/>
            <person name="Barlow K.F."/>
            <person name="Bloom T."/>
            <person name="Bruford E."/>
            <person name="Chang J.L."/>
            <person name="Cuomo C.A."/>
            <person name="Eichler E."/>
            <person name="FitzGerald M.G."/>
            <person name="Jaffe D.B."/>
            <person name="LaButti K."/>
            <person name="Nicol R."/>
            <person name="Park H.-S."/>
            <person name="Seaman C."/>
            <person name="Sougnez C."/>
            <person name="Yang X."/>
            <person name="Zimmer A.R."/>
            <person name="Zody M.C."/>
            <person name="Birren B.W."/>
            <person name="Nusbaum C."/>
            <person name="Fujiyama A."/>
            <person name="Hattori M."/>
            <person name="Rogers J."/>
            <person name="Lander E.S."/>
            <person name="Sakaki Y."/>
        </authorList>
    </citation>
    <scope>NUCLEOTIDE SEQUENCE [LARGE SCALE GENOMIC DNA]</scope>
</reference>
<reference key="6">
    <citation type="journal article" date="2004" name="Genome Res.">
        <title>The status, quality, and expansion of the NIH full-length cDNA project: the Mammalian Gene Collection (MGC).</title>
        <authorList>
            <consortium name="The MGC Project Team"/>
        </authorList>
    </citation>
    <scope>NUCLEOTIDE SEQUENCE [LARGE SCALE MRNA] (ISOFORM 1)</scope>
    <source>
        <tissue>Kidney</tissue>
    </source>
</reference>
<reference key="7">
    <citation type="journal article" date="2001" name="Life Sci.">
        <title>Characterization of ochratoxin A transport by human organic anion transporters.</title>
        <authorList>
            <person name="Jung K.Y."/>
            <person name="Takeda M."/>
            <person name="Kim D.K."/>
            <person name="Tojo A."/>
            <person name="Narikawa S."/>
            <person name="Yoo B.S."/>
            <person name="Hosoyamada M."/>
            <person name="Cha S.H."/>
            <person name="Sekine T."/>
            <person name="Endou H."/>
        </authorList>
    </citation>
    <scope>FUNCTION</scope>
    <scope>BIOPHYSICOCHEMICAL PROPERTIES</scope>
</reference>
<reference key="8">
    <citation type="journal article" date="2001" name="Mol. Pharmacol.">
        <title>Identification and characterization of human organic anion transporter 3 expressing predominantly in the kidney.</title>
        <authorList>
            <person name="Cha S.H."/>
            <person name="Sekine T."/>
            <person name="Fukushima J.I."/>
            <person name="Kanai Y."/>
            <person name="Kobayashi Y."/>
            <person name="Goya T."/>
            <person name="Endou H."/>
        </authorList>
    </citation>
    <scope>FUNCTION</scope>
    <scope>TISSUE SPECIFICITY</scope>
    <scope>TRANSPORTER ACTIVITY</scope>
    <scope>SUBCELLULAR LOCATION</scope>
</reference>
<reference key="9">
    <citation type="journal article" date="2002" name="J. Am. Soc. Nephrol.">
        <title>Gene expression levels and immunolocalization of organic ion transporters in the human kidney.</title>
        <authorList>
            <person name="Motohashi H."/>
            <person name="Sakurai Y."/>
            <person name="Saito H."/>
            <person name="Masuda S."/>
            <person name="Urakami Y."/>
            <person name="Goto M."/>
            <person name="Fukatsu A."/>
            <person name="Ogawa O."/>
            <person name="Inui K."/>
        </authorList>
    </citation>
    <scope>SUBCELLULAR LOCATION</scope>
    <scope>TISSUE SPECIFICITY</scope>
</reference>
<reference key="10">
    <citation type="journal article" date="2002" name="J. Pharmacol. Exp. Ther.">
        <title>Human organic anion transporters and human organic cation transporters mediate renal transport of prostaglandins.</title>
        <authorList>
            <person name="Kimura H."/>
            <person name="Takeda M."/>
            <person name="Narikawa S."/>
            <person name="Enomoto A."/>
            <person name="Ichida K."/>
            <person name="Endou H."/>
        </authorList>
    </citation>
    <scope>FUNCTION</scope>
    <scope>TRANSPORTER ACTIVITY</scope>
    <scope>BIOPHYSICOCHEMICAL PROPERTIES</scope>
</reference>
<reference key="11">
    <citation type="journal article" date="2003" name="Cell. Physiol. Biochem.">
        <title>Human organic anion transporter 3 (hOAT3) can operate as an exchanger and mediate secretory urate flux.</title>
        <authorList>
            <person name="Bakhiya A."/>
            <person name="Bahn A."/>
            <person name="Burckhardt G."/>
            <person name="Wolff N."/>
        </authorList>
    </citation>
    <scope>FUNCTION</scope>
    <scope>TRANSPORTER ACTIVITY</scope>
</reference>
<reference key="12">
    <citation type="journal article" date="2004" name="Kidney Int.">
        <title>Characterization of uremic toxin transport by organic anion transporters in the kidney.</title>
        <authorList>
            <person name="Deguchi T."/>
            <person name="Kusuhara H."/>
            <person name="Takadate A."/>
            <person name="Endou H."/>
            <person name="Otagiri M."/>
            <person name="Sugiyama Y."/>
        </authorList>
    </citation>
    <scope>FUNCTION</scope>
    <scope>TRANSPORTER ACTIVITY</scope>
    <scope>BIOPHYSICOCHEMICAL PROPERTIES</scope>
</reference>
<reference key="13">
    <citation type="journal article" date="2005" name="J. Pharmacol. Exp. Ther.">
        <title>Transport of the natural sweetener stevioside and its aglycone steviol by human organic anion transporter (hOAT1; SLC22A6) and hOAT3 (SLC22A8).</title>
        <authorList>
            <person name="Srimaroeng C."/>
            <person name="Chatsudthipong V."/>
            <person name="Aslamkhan A.G."/>
            <person name="Pritchard J.B."/>
        </authorList>
    </citation>
    <scope>FUNCTION</scope>
</reference>
<reference key="14">
    <citation type="journal article" date="2005" name="Pharm. Res.">
        <title>Molecular cloning and functional analyses of OAT1 and OAT3 from cynomolgus monkey kidney.</title>
        <authorList>
            <person name="Tahara H."/>
            <person name="Shono M."/>
            <person name="Kusuhara H."/>
            <person name="Kinoshita H."/>
            <person name="Fuse E."/>
            <person name="Takadate A."/>
            <person name="Otagiri M."/>
            <person name="Sugiyama Y."/>
        </authorList>
    </citation>
    <scope>FUNCTION</scope>
    <scope>TRANSPORTER ACTIVITY</scope>
    <scope>BIOPHYSICOCHEMICAL PROPERTIES</scope>
</reference>
<reference key="15">
    <citation type="journal article" date="2005" name="Pflugers Arch.">
        <title>Presence of organic anion transporters 3 (OAT3) and 4 (OAT4) in human adrenocortical cells.</title>
        <authorList>
            <person name="Asif A.R."/>
            <person name="Steffgen J."/>
            <person name="Metten M."/>
            <person name="Grunewald R.W."/>
            <person name="Mueller G.A."/>
            <person name="Bahn A."/>
            <person name="Burckhardt G."/>
            <person name="Hagos Y."/>
        </authorList>
    </citation>
    <scope>FUNCTION</scope>
    <scope>TISSUE SPECIFICITY</scope>
    <scope>TRANSPORTER ACTIVITY</scope>
    <scope>BIOPHYSICOCHEMICAL PROPERTIES</scope>
</reference>
<reference key="16">
    <citation type="journal article" date="2006" name="Drug Metab. Dispos.">
        <title>Inhibition of oat3-mediated renal uptake as a mechanism for drug-drug interaction between fexofenadine and probenecid.</title>
        <authorList>
            <person name="Tahara H."/>
            <person name="Kusuhara H."/>
            <person name="Maeda K."/>
            <person name="Koepsell H."/>
            <person name="Fuse E."/>
            <person name="Sugiyama Y."/>
        </authorList>
    </citation>
    <scope>FUNCTION</scope>
    <scope>BIOPHYSICOCHEMICAL PROPERTIES</scope>
</reference>
<reference key="17">
    <citation type="journal article" date="2012" name="Pharmacol. Res.">
        <title>Interaction and transport of kynurenic acid via human organic anion transporters hOAT1 and hOAT3.</title>
        <authorList>
            <person name="Uwai Y."/>
            <person name="Honjo H."/>
            <person name="Iwamoto K."/>
        </authorList>
    </citation>
    <scope>FUNCTION</scope>
    <scope>TRANSPORTER ACTIVITY</scope>
    <scope>BIOPHYSICOCHEMICAL PROPERTIES</scope>
</reference>
<reference key="18">
    <citation type="journal article" date="2013" name="Biosci. Biotechnol. Biochem.">
        <title>Transport of xanthurenic acid by rat/human organic anion transporters OAT1 and OAT3.</title>
        <authorList>
            <person name="Uwai Y."/>
            <person name="Honjo E."/>
        </authorList>
    </citation>
    <scope>FUNCTION</scope>
    <scope>TRANSPORTER ACTIVITY</scope>
</reference>
<reference key="19">
    <citation type="journal article" date="2015" name="Am. J. Physiol.">
        <title>Human organic anion transporter 2 is distinct from organic anion transporters 1 and 3 with respect to transport function.</title>
        <authorList>
            <person name="Henjakovic M."/>
            <person name="Hagos Y."/>
            <person name="Krick W."/>
            <person name="Burckhardt G."/>
            <person name="Burckhardt B.C."/>
        </authorList>
    </citation>
    <scope>FUNCTION</scope>
    <scope>TRANSPORTER ACTIVITY</scope>
    <scope>BIOPHYSICOCHEMICAL PROPERTIES</scope>
</reference>
<reference key="20">
    <citation type="journal article" date="2017" name="Mol. Cell. Biochem.">
        <title>Organic anion transporters, OAT1 and OAT3, are crucial biopterin transporters involved in bodily distribution of tetrahydrobiopterin and exclusion of its excess.</title>
        <authorList>
            <person name="Ohashi A."/>
            <person name="Mamada K."/>
            <person name="Harada T."/>
            <person name="Naito M."/>
            <person name="Takahashi T."/>
            <person name="Aizawa S."/>
            <person name="Hasegawa H."/>
        </authorList>
    </citation>
    <scope>FUNCTION</scope>
    <scope>TRANSPORTER ACTIVITY</scope>
    <scope>BIOPHYSICOCHEMICAL PROPERTIES</scope>
</reference>
<reference key="21">
    <citation type="journal article" date="2019" name="PLoS Genet.">
        <title>Unraveling the functional role of the orphan solute carrier, SLC22A24 in the transport of steroid conjugates through metabolomic and genome-wide association studies.</title>
        <authorList>
            <person name="Yee S.W."/>
            <person name="Stecula A."/>
            <person name="Chien H.C."/>
            <person name="Zou L."/>
            <person name="Feofanova E.V."/>
            <person name="van Borselen M."/>
            <person name="Cheung K.W.K."/>
            <person name="Yousri N.A."/>
            <person name="Suhre K."/>
            <person name="Kinchen J.M."/>
            <person name="Boerwinkle E."/>
            <person name="Irannejad R."/>
            <person name="Yu B."/>
            <person name="Giacomini K.M."/>
        </authorList>
    </citation>
    <scope>TRANSPORTER ACTIVITY</scope>
    <scope>FUNCTION</scope>
</reference>
<reference key="22">
    <citation type="journal article" date="2003" name="Clin. Pharmacol. Ther.">
        <title>Polymorphisms of OATP-C (SLC21A6) and OAT3 (SLC22A8) genes: consequences for pravastatin pharmacokinetics.</title>
        <authorList>
            <person name="Nishizato Y."/>
            <person name="Ieiri I."/>
            <person name="Suzuki H."/>
            <person name="Kimura M."/>
            <person name="Kawabata K."/>
            <person name="Hirota T."/>
            <person name="Takane H."/>
            <person name="Irie S."/>
            <person name="Kusuhara H."/>
            <person name="Urasaki Y."/>
            <person name="Urae A."/>
            <person name="Higuchi S."/>
            <person name="Otsubo K."/>
            <person name="Sugiyama Y."/>
        </authorList>
    </citation>
    <scope>VARIANT VAL-389</scope>
</reference>
<reference key="23">
    <citation type="journal article" date="2006" name="Am. J. Physiol.">
        <title>The human organic anion transporter 3 (OAT3; SLC22A8): genetic variation and functional genomics.</title>
        <authorList>
            <person name="Erdman A.R."/>
            <person name="Mangravite L.M."/>
            <person name="Urban T.J."/>
            <person name="Lagpacan L.L."/>
            <person name="Castro R.A."/>
            <person name="de la Cruz M."/>
            <person name="Chan W."/>
            <person name="Huang C.C."/>
            <person name="Johns S.J."/>
            <person name="Kawamoto M."/>
            <person name="Stryke D."/>
            <person name="Taylor T.R."/>
            <person name="Carlson E.J."/>
            <person name="Ferrin T.E."/>
            <person name="Brett C.M."/>
            <person name="Burchard E.G."/>
            <person name="Giacomini K.M."/>
        </authorList>
    </citation>
    <scope>VARIANTS SER-149; ARG-260; TRP-277 AND PHE-305</scope>
    <scope>CHARACTERIZATION OF VARIANTS SER-149; ARG-260; TRP-277 AND PHE-305</scope>
</reference>
<keyword id="KW-0025">Alternative splicing</keyword>
<keyword id="KW-1003">Cell membrane</keyword>
<keyword id="KW-0216">Detoxification</keyword>
<keyword id="KW-0325">Glycoprotein</keyword>
<keyword id="KW-0406">Ion transport</keyword>
<keyword id="KW-0445">Lipid transport</keyword>
<keyword id="KW-0472">Membrane</keyword>
<keyword id="KW-0597">Phosphoprotein</keyword>
<keyword id="KW-1267">Proteomics identification</keyword>
<keyword id="KW-1185">Reference proteome</keyword>
<keyword id="KW-0812">Transmembrane</keyword>
<keyword id="KW-1133">Transmembrane helix</keyword>
<keyword id="KW-0813">Transport</keyword>
<name>S22A8_HUMAN</name>
<comment type="function">
    <text evidence="2 3 6 7 8 11 12 13 14 15 17 18 19 20 21 22 27">Functions as an organic anion/dicarboxylate exchanger that couples organic anion uptake indirectly to the sodium gradient (PubMed:14586168, PubMed:15644426, PubMed:15846473, PubMed:16455804, PubMed:31553721). Transports organic anions such as estrone 3-sulfate (E1S) and urate in exchange for dicarboxylates such as glutarate or ketoglutarate (2-oxoglutarate) (PubMed:14586168, PubMed:15846473, PubMed:15864504, PubMed:22108572, PubMed:23832370). Plays an important role in the excretion of endogenous and exogenous organic anions, especially from the kidney and the brain (PubMed:11306713, PubMed:14586168, PubMed:15846473). E1S transport is pH- and chloride-dependent and may also involve E1S/cGMP exchange (PubMed:26377792). Responsible for the transport of prostaglandin E2 (PGE2) and prostaglandin F2(alpha) (PGF2(alpha)) in the basolateral side of the renal tubule (PubMed:11907186). Involved in the transport of neuroactive tryptophan metabolites kynurenate and xanthurenate (PubMed:22108572, PubMed:23832370). Functions as a biopterin transporters involved in the uptake and the secretion of coenzymes tetrahydrobiopterin (BH4), dihydrobiopterin (BH2) and sepiapterin to urine, thereby determining baseline levels of blood biopterins (PubMed:28534121). May be involved in the basolateral transport of steviol, a metabolite of the popular sugar substitute stevioside (PubMed:15644426). May participate in the detoxification/ renal excretion of drugs and xenobiotics, such as the histamine H(2)-receptor antagonists fexofenadine and cimetidine, the antibiotic benzylpenicillin (PCG), the anionic herbicide 2,4-dichloro-phenoxyacetate (2,4-D), the diagnostic agent p-aminohippurate (PAH), the antiviral acyclovir (ACV), and the mycotoxin ochratoxin (OTA), by transporting these exogenous organic anions across the cell membrane in exchange for dicarboxylates such as 2-oxoglutarate (PubMed:11669456, PubMed:15846473, PubMed:16455804). Contributes to the renal uptake of potent uremic toxins (indoxyl sulfate (IS), indole acetate (IA), hippurate/N-benzoylglycine (HA) and 3-carboxy-4-methyl-5-propyl-2-furanpropionate (CMPF)), pravastatin, PCG, E1S and dehydroepiandrosterone sulfate (DHEAS), and is partly involved in the renal uptake of temocaprilat (an angiotensin-converting enzyme (ACE) inhibitor) (PubMed:14675047). May contribute to the release of cortisol in the adrenals (PubMed:15864504). Involved in one of the detoxification systems on the choroid plexus (CP), removes substrates such as E1S or taurocholate (TC), PCG, 2,4-D and PAH, from the cerebrospinal fluid (CSF) to the blood for eventual excretion in urine and bile (By similarity). Also contributes to the uptake of several other organic compounds such as the prostanoids prostaglandin E(2) and prostaglandin F(2-alpha), L-carnitine, and the therapeutic drugs allopurinol, 6-mercaptopurine (6-MP) and 5-fluorouracil (5-FU) (By similarity). Mediates the transport of PAH, PCG, and the statins pravastatin and pitavastatin, from the cerebrum into the blood circulation across the blood-brain barrier (BBB). In summary, plays a role in the efflux of drugs and xenobiotics, helping reduce their undesired toxicological effects on the body (By similarity).</text>
</comment>
<comment type="catalytic activity">
    <reaction evidence="11 14 15 22">
        <text>estrone 3-sulfate(out) + glutarate(in) = estrone 3-sulfate(in) + glutarate(out)</text>
        <dbReference type="Rhea" id="RHEA:72151"/>
        <dbReference type="ChEBI" id="CHEBI:30921"/>
        <dbReference type="ChEBI" id="CHEBI:60050"/>
    </reaction>
</comment>
<comment type="catalytic activity">
    <reaction evidence="11">
        <text>estrone 3-sulfate(in) + 2-oxoglutarate(out) = estrone 3-sulfate(out) + 2-oxoglutarate(in)</text>
        <dbReference type="Rhea" id="RHEA:72399"/>
        <dbReference type="ChEBI" id="CHEBI:16810"/>
        <dbReference type="ChEBI" id="CHEBI:60050"/>
    </reaction>
</comment>
<comment type="catalytic activity">
    <reaction evidence="11">
        <text>glutarate(in) + 2-oxoglutarate(out) = glutarate(out) + 2-oxoglutarate(in)</text>
        <dbReference type="Rhea" id="RHEA:71751"/>
        <dbReference type="ChEBI" id="CHEBI:16810"/>
        <dbReference type="ChEBI" id="CHEBI:30921"/>
    </reaction>
</comment>
<comment type="catalytic activity">
    <reaction evidence="11">
        <text>urate(in) + 2-oxoglutarate(out) = urate(out) + 2-oxoglutarate(in)</text>
        <dbReference type="Rhea" id="RHEA:72403"/>
        <dbReference type="ChEBI" id="CHEBI:16810"/>
        <dbReference type="ChEBI" id="CHEBI:17775"/>
    </reaction>
</comment>
<comment type="catalytic activity">
    <reaction evidence="30">
        <text>taurocholate(out) + glutarate(in) = taurocholate(in) + glutarate(out)</text>
        <dbReference type="Rhea" id="RHEA:72159"/>
        <dbReference type="ChEBI" id="CHEBI:30921"/>
        <dbReference type="ChEBI" id="CHEBI:36257"/>
    </reaction>
</comment>
<comment type="catalytic activity">
    <reaction evidence="30">
        <text>dehydroepiandrosterone 3-sulfate(out) + glutarate(in) = dehydroepiandrosterone 3-sulfate(in) + glutarate(out)</text>
        <dbReference type="Rhea" id="RHEA:72355"/>
        <dbReference type="ChEBI" id="CHEBI:30921"/>
        <dbReference type="ChEBI" id="CHEBI:57905"/>
    </reaction>
</comment>
<comment type="catalytic activity">
    <reaction evidence="31">
        <text>prostaglandin F2alpha(out) + glutarate(in) = prostaglandin F2alpha(in) + glutarate(out)</text>
        <dbReference type="Rhea" id="RHEA:72503"/>
        <dbReference type="ChEBI" id="CHEBI:30921"/>
        <dbReference type="ChEBI" id="CHEBI:57404"/>
    </reaction>
</comment>
<comment type="catalytic activity">
    <reaction evidence="31">
        <text>prostaglandin F2alpha(out) + 2-oxoglutarate(in) = prostaglandin F2alpha(in) + 2-oxoglutarate(out)</text>
        <dbReference type="Rhea" id="RHEA:72507"/>
        <dbReference type="ChEBI" id="CHEBI:16810"/>
        <dbReference type="ChEBI" id="CHEBI:57404"/>
    </reaction>
</comment>
<comment type="catalytic activity">
    <reaction evidence="2">
        <text>(R)-carnitine(out) + 2-oxoglutarate(in) = (R)-carnitine(in) + 2-oxoglutarate(out)</text>
        <dbReference type="Rhea" id="RHEA:72511"/>
        <dbReference type="ChEBI" id="CHEBI:16347"/>
        <dbReference type="ChEBI" id="CHEBI:16810"/>
    </reaction>
</comment>
<comment type="catalytic activity">
    <reaction evidence="2">
        <text>glutarate(in) + (R)-carnitine(out) = glutarate(out) + (R)-carnitine(in)</text>
        <dbReference type="Rhea" id="RHEA:72515"/>
        <dbReference type="ChEBI" id="CHEBI:16347"/>
        <dbReference type="ChEBI" id="CHEBI:30921"/>
    </reaction>
</comment>
<comment type="catalytic activity">
    <reaction evidence="31">
        <text>prostaglandin E2(out) + 2-oxoglutarate(in) = prostaglandin E2(in) + 2-oxoglutarate(out)</text>
        <dbReference type="Rhea" id="RHEA:72499"/>
        <dbReference type="ChEBI" id="CHEBI:16810"/>
        <dbReference type="ChEBI" id="CHEBI:606564"/>
    </reaction>
</comment>
<comment type="catalytic activity">
    <reaction evidence="31">
        <text>prostaglandin E2(out) + glutarate(in) = prostaglandin E2(in) + glutarate(out)</text>
        <dbReference type="Rhea" id="RHEA:72495"/>
        <dbReference type="ChEBI" id="CHEBI:30921"/>
        <dbReference type="ChEBI" id="CHEBI:606564"/>
    </reaction>
</comment>
<comment type="catalytic activity">
    <reaction evidence="11">
        <text>urate(in) + glutarate(out) = urate(out) + glutarate(in)</text>
        <dbReference type="Rhea" id="RHEA:72551"/>
        <dbReference type="ChEBI" id="CHEBI:17775"/>
        <dbReference type="ChEBI" id="CHEBI:30921"/>
    </reaction>
</comment>
<comment type="catalytic activity">
    <reaction evidence="30">
        <text>taurocholate(out) + 2-oxoglutarate(in) = taurocholate(in) + 2-oxoglutarate(out)</text>
        <dbReference type="Rhea" id="RHEA:72547"/>
        <dbReference type="ChEBI" id="CHEBI:16810"/>
        <dbReference type="ChEBI" id="CHEBI:36257"/>
    </reaction>
</comment>
<comment type="catalytic activity">
    <reaction evidence="30">
        <text>dehydroepiandrosterone 3-sulfate(out) + 2-oxoglutarate(in) = dehydroepiandrosterone 3-sulfate(in) + 2-oxoglutarate(out)</text>
        <dbReference type="Rhea" id="RHEA:72543"/>
        <dbReference type="ChEBI" id="CHEBI:16810"/>
        <dbReference type="ChEBI" id="CHEBI:57905"/>
    </reaction>
</comment>
<comment type="catalytic activity">
    <reaction evidence="18 19">
        <text>kynurenate(out) + a dicarboxylate(in) = kynurenate(in) + a dicarboxylate(out)</text>
        <dbReference type="Rhea" id="RHEA:76087"/>
        <dbReference type="ChEBI" id="CHEBI:28965"/>
        <dbReference type="ChEBI" id="CHEBI:58454"/>
    </reaction>
</comment>
<comment type="catalytic activity">
    <reaction evidence="12">
        <text>(indol-3-yl)acetate(out) + a dicarboxylate(in) = (indol-3-yl)acetate(in) + a dicarboxylate(out)</text>
        <dbReference type="Rhea" id="RHEA:75983"/>
        <dbReference type="ChEBI" id="CHEBI:28965"/>
        <dbReference type="ChEBI" id="CHEBI:30854"/>
    </reaction>
</comment>
<comment type="catalytic activity">
    <reaction evidence="12">
        <text>indoxyl sulfate(out) + a dicarboxylate(in) = indoxyl sulfate(in) + a dicarboxylate(out)</text>
        <dbReference type="Rhea" id="RHEA:75987"/>
        <dbReference type="ChEBI" id="CHEBI:28965"/>
        <dbReference type="ChEBI" id="CHEBI:144643"/>
    </reaction>
</comment>
<comment type="catalytic activity">
    <reaction evidence="12">
        <text>N-benzoylglycine(out) + a dicarboxylate(in) = N-benzoylglycine(in) + a dicarboxylate(out)</text>
        <dbReference type="Rhea" id="RHEA:75991"/>
        <dbReference type="ChEBI" id="CHEBI:28965"/>
        <dbReference type="ChEBI" id="CHEBI:606565"/>
    </reaction>
</comment>
<comment type="catalytic activity">
    <reaction evidence="12">
        <text>3-carboxy-4-methyl-5-propyl-2-furanpropanoate(out) + a dicarboxylate(in) = 3-carboxy-4-methyl-5-propyl-2-furanpropanoate(in) + a dicarboxylate(out)</text>
        <dbReference type="Rhea" id="RHEA:75995"/>
        <dbReference type="ChEBI" id="CHEBI:28965"/>
        <dbReference type="ChEBI" id="CHEBI:194524"/>
    </reaction>
</comment>
<comment type="catalytic activity">
    <reaction evidence="21">
        <text>(6R)-L-erythro-5,6,7,8-tetrahydrobiopterin(out) + a dicarboxylate(in) = (6R)-L-erythro-5,6,7,8-tetrahydrobiopterin(in) + a dicarboxylate(out)</text>
        <dbReference type="Rhea" id="RHEA:76071"/>
        <dbReference type="ChEBI" id="CHEBI:28965"/>
        <dbReference type="ChEBI" id="CHEBI:59560"/>
    </reaction>
</comment>
<comment type="catalytic activity">
    <reaction evidence="21">
        <text>L-erythro-7,8-dihydrobiopterin(out) + a dicarboxylate(in) = L-erythro-7,8-dihydrobiopterin(in) + a dicarboxylate(out)</text>
        <dbReference type="Rhea" id="RHEA:76075"/>
        <dbReference type="ChEBI" id="CHEBI:28965"/>
        <dbReference type="ChEBI" id="CHEBI:43029"/>
    </reaction>
</comment>
<comment type="catalytic activity">
    <reaction evidence="21">
        <text>L-sepiapterin(out) + a dicarboxylate(in) = L-sepiapterin(in) + a dicarboxylate(out)</text>
        <dbReference type="Rhea" id="RHEA:76079"/>
        <dbReference type="ChEBI" id="CHEBI:28965"/>
        <dbReference type="ChEBI" id="CHEBI:194527"/>
    </reaction>
</comment>
<comment type="biophysicochemical properties">
    <kinetics>
        <KM evidence="8">345 nM for prostaglandin E2</KM>
        <KM evidence="8">1.092 uM for prostaglandin F2alpha</KM>
        <KM evidence="14">9.51 uM for estrone 3-sulfate</KM>
        <KM evidence="6">3.1 uM for estrone 3-sulfate</KM>
        <KM evidence="17">70.2 uM for fexofenadine</KM>
        <KM evidence="15">2.4 uM for cortisol</KM>
        <KM evidence="18">4.86 uM for kynurenate</KM>
        <KM evidence="12">263 uM for indoxyl sulfate</KM>
        <KM evidence="12">26.5 uM for 3-carboxy-4- methyl-5-propyl-2-furanpropionate</KM>
        <KM evidence="7">0.75 uM for ochratoxin A</KM>
        <Vmax evidence="14">265.0 pmol/min/mg enzyme with estrone 3-sulfate as substrate</Vmax>
        <Vmax evidence="17">120.0 pmol/min/mg enzyme with fexofenadine as substrate</Vmax>
        <Vmax evidence="12">505.0 pmol/min/mg enzyme for indoxyl sulfate uptake</Vmax>
        <Vmax evidence="12">76.5 pmol/min/mg enzyme for 3-carboxy-4- methyl-5-propyl-2-furanpropionate uptake</Vmax>
    </kinetics>
    <phDependence>
        <text evidence="20">Optimum pH is 6 for estrone 3-sulfate uptake and uptake is higher at acidic than at alkaline extracellular pH.</text>
    </phDependence>
</comment>
<comment type="subcellular location">
    <subcellularLocation>
        <location evidence="6">Basolateral cell membrane</location>
        <topology evidence="29">Multi-pass membrane protein</topology>
    </subcellularLocation>
    <text evidence="1 3 6">Localizes on the brush border membrane of the choroid epithelial cells (By similarity). Localizes to the basolateral membrane of the proximal tubular cells (PubMed:11306713). Localizes on the abluminal and possibly, luminal membrane of the brain capillary endothelial cells (BCEC) (By similarity).</text>
</comment>
<comment type="alternative products">
    <event type="alternative splicing"/>
    <isoform>
        <id>Q8TCC7-1</id>
        <name>1</name>
        <sequence type="displayed"/>
    </isoform>
    <isoform>
        <id>Q8TCC7-2</id>
        <name>2</name>
        <sequence type="described" ref="VSP_022565"/>
    </isoform>
    <isoform>
        <id>Q8TCC7-5</id>
        <name>5</name>
        <sequence type="described" ref="VSP_045824"/>
    </isoform>
    <isoform>
        <id>Q8TCC7-3</id>
        <name>3</name>
        <sequence type="described" ref="VSP_022562 VSP_022563 VSP_022564"/>
    </isoform>
    <isoform>
        <id>Q8TCC7-4</id>
        <name>4</name>
        <sequence type="described" ref="VSP_045272"/>
    </isoform>
</comment>
<comment type="tissue specificity">
    <text evidence="6 9 15">Strongly expressed in kidney (PubMed:11306713, PubMed:11912245). Weaker expression in brain and skeletal muscle (PubMed:11306713). Expressed in adrenal glands (PubMed:15864504).</text>
</comment>
<comment type="similarity">
    <text evidence="29">Belongs to the major facilitator (TC 2.A.1) superfamily. Organic cation transporter (TC 2.A.1.19) family.</text>
</comment>
<comment type="sequence caution" evidence="29">
    <conflict type="frameshift">
        <sequence resource="EMBL-CDS" id="AAD19357"/>
    </conflict>
</comment>
<comment type="sequence caution" evidence="29">
    <conflict type="erroneous initiation">
        <sequence resource="EMBL-CDS" id="BAD92929"/>
    </conflict>
</comment>